<name>SYGA_SHEON</name>
<dbReference type="EC" id="6.1.1.14" evidence="1"/>
<dbReference type="EMBL" id="AE014299">
    <property type="protein sequence ID" value="AAN53102.1"/>
    <property type="molecule type" value="Genomic_DNA"/>
</dbReference>
<dbReference type="RefSeq" id="NP_715657.1">
    <property type="nucleotide sequence ID" value="NC_004347.2"/>
</dbReference>
<dbReference type="RefSeq" id="WP_011070431.1">
    <property type="nucleotide sequence ID" value="NZ_CP053946.1"/>
</dbReference>
<dbReference type="SMR" id="Q8EKS5"/>
<dbReference type="STRING" id="211586.SO_0015"/>
<dbReference type="PaxDb" id="211586-SO_0015"/>
<dbReference type="GeneID" id="67441599"/>
<dbReference type="KEGG" id="son:SO_0015"/>
<dbReference type="PATRIC" id="fig|211586.12.peg.15"/>
<dbReference type="eggNOG" id="COG0752">
    <property type="taxonomic scope" value="Bacteria"/>
</dbReference>
<dbReference type="HOGENOM" id="CLU_057066_1_0_6"/>
<dbReference type="OrthoDB" id="9802183at2"/>
<dbReference type="PhylomeDB" id="Q8EKS5"/>
<dbReference type="BioCyc" id="SONE211586:G1GMP-15-MONOMER"/>
<dbReference type="Proteomes" id="UP000008186">
    <property type="component" value="Chromosome"/>
</dbReference>
<dbReference type="GO" id="GO:0005737">
    <property type="term" value="C:cytoplasm"/>
    <property type="evidence" value="ECO:0007669"/>
    <property type="project" value="UniProtKB-SubCell"/>
</dbReference>
<dbReference type="GO" id="GO:0005524">
    <property type="term" value="F:ATP binding"/>
    <property type="evidence" value="ECO:0007669"/>
    <property type="project" value="UniProtKB-UniRule"/>
</dbReference>
<dbReference type="GO" id="GO:0004820">
    <property type="term" value="F:glycine-tRNA ligase activity"/>
    <property type="evidence" value="ECO:0007669"/>
    <property type="project" value="UniProtKB-UniRule"/>
</dbReference>
<dbReference type="GO" id="GO:0006426">
    <property type="term" value="P:glycyl-tRNA aminoacylation"/>
    <property type="evidence" value="ECO:0007669"/>
    <property type="project" value="UniProtKB-UniRule"/>
</dbReference>
<dbReference type="CDD" id="cd00733">
    <property type="entry name" value="GlyRS_alpha_core"/>
    <property type="match status" value="1"/>
</dbReference>
<dbReference type="FunFam" id="3.30.930.10:FF:000006">
    <property type="entry name" value="Glycine--tRNA ligase alpha subunit"/>
    <property type="match status" value="1"/>
</dbReference>
<dbReference type="Gene3D" id="3.30.930.10">
    <property type="entry name" value="Bira Bifunctional Protein, Domain 2"/>
    <property type="match status" value="1"/>
</dbReference>
<dbReference type="Gene3D" id="1.20.58.180">
    <property type="entry name" value="Class II aaRS and biotin synthetases, domain 2"/>
    <property type="match status" value="1"/>
</dbReference>
<dbReference type="HAMAP" id="MF_00254">
    <property type="entry name" value="Gly_tRNA_synth_alpha"/>
    <property type="match status" value="1"/>
</dbReference>
<dbReference type="InterPro" id="IPR045864">
    <property type="entry name" value="aa-tRNA-synth_II/BPL/LPL"/>
</dbReference>
<dbReference type="InterPro" id="IPR006194">
    <property type="entry name" value="Gly-tRNA-synth_heterodimer"/>
</dbReference>
<dbReference type="InterPro" id="IPR002310">
    <property type="entry name" value="Gly-tRNA_ligase_asu"/>
</dbReference>
<dbReference type="NCBIfam" id="TIGR00388">
    <property type="entry name" value="glyQ"/>
    <property type="match status" value="1"/>
</dbReference>
<dbReference type="NCBIfam" id="NF006827">
    <property type="entry name" value="PRK09348.1"/>
    <property type="match status" value="1"/>
</dbReference>
<dbReference type="PANTHER" id="PTHR30075:SF2">
    <property type="entry name" value="GLYCINE--TRNA LIGASE, CHLOROPLASTIC_MITOCHONDRIAL 2"/>
    <property type="match status" value="1"/>
</dbReference>
<dbReference type="PANTHER" id="PTHR30075">
    <property type="entry name" value="GLYCYL-TRNA SYNTHETASE"/>
    <property type="match status" value="1"/>
</dbReference>
<dbReference type="Pfam" id="PF02091">
    <property type="entry name" value="tRNA-synt_2e"/>
    <property type="match status" value="1"/>
</dbReference>
<dbReference type="PRINTS" id="PR01044">
    <property type="entry name" value="TRNASYNTHGA"/>
</dbReference>
<dbReference type="SUPFAM" id="SSF55681">
    <property type="entry name" value="Class II aaRS and biotin synthetases"/>
    <property type="match status" value="1"/>
</dbReference>
<dbReference type="PROSITE" id="PS50861">
    <property type="entry name" value="AA_TRNA_LIGASE_II_GLYAB"/>
    <property type="match status" value="1"/>
</dbReference>
<comment type="catalytic activity">
    <reaction evidence="1">
        <text>tRNA(Gly) + glycine + ATP = glycyl-tRNA(Gly) + AMP + diphosphate</text>
        <dbReference type="Rhea" id="RHEA:16013"/>
        <dbReference type="Rhea" id="RHEA-COMP:9664"/>
        <dbReference type="Rhea" id="RHEA-COMP:9683"/>
        <dbReference type="ChEBI" id="CHEBI:30616"/>
        <dbReference type="ChEBI" id="CHEBI:33019"/>
        <dbReference type="ChEBI" id="CHEBI:57305"/>
        <dbReference type="ChEBI" id="CHEBI:78442"/>
        <dbReference type="ChEBI" id="CHEBI:78522"/>
        <dbReference type="ChEBI" id="CHEBI:456215"/>
        <dbReference type="EC" id="6.1.1.14"/>
    </reaction>
</comment>
<comment type="subunit">
    <text evidence="1">Tetramer of two alpha and two beta subunits.</text>
</comment>
<comment type="subcellular location">
    <subcellularLocation>
        <location evidence="1">Cytoplasm</location>
    </subcellularLocation>
</comment>
<comment type="similarity">
    <text evidence="1">Belongs to the class-II aminoacyl-tRNA synthetase family.</text>
</comment>
<gene>
    <name evidence="1" type="primary">glyQ</name>
    <name type="ordered locus">SO_0015</name>
</gene>
<sequence length="301" mass="34478">MTTKHDVKTFQGFILTLQEYWAQQGCAIVQPLDMEVGAGTFHPQTFLRSLGPEPMSSAYVQPSRRPTDGRYGENPNRLQHYYQFQVVLKPSPDNIQELYLGSLQALGIDTQIHDIRFVEDNWESPTLGAWGLGWEVWLNGMEVTQFTYFQQVGGLECSPVTGEITYGLERLAMYIQGVDSVYDLVWTDGPMGRITYGDVFHQNEVEQSTYNFEHADVDFMFALFDQCEKMCQHLLSLEKPLPLPAYEQVMKASHAFNLLDARHAISVTERQRYILRVRTMAKAVAESYYQAREALGFPMCK</sequence>
<keyword id="KW-0030">Aminoacyl-tRNA synthetase</keyword>
<keyword id="KW-0067">ATP-binding</keyword>
<keyword id="KW-0963">Cytoplasm</keyword>
<keyword id="KW-0436">Ligase</keyword>
<keyword id="KW-0547">Nucleotide-binding</keyword>
<keyword id="KW-0648">Protein biosynthesis</keyword>
<keyword id="KW-1185">Reference proteome</keyword>
<proteinExistence type="inferred from homology"/>
<evidence type="ECO:0000255" key="1">
    <source>
        <dbReference type="HAMAP-Rule" id="MF_00254"/>
    </source>
</evidence>
<accession>Q8EKS5</accession>
<organism>
    <name type="scientific">Shewanella oneidensis (strain ATCC 700550 / JCM 31522 / CIP 106686 / LMG 19005 / NCIMB 14063 / MR-1)</name>
    <dbReference type="NCBI Taxonomy" id="211586"/>
    <lineage>
        <taxon>Bacteria</taxon>
        <taxon>Pseudomonadati</taxon>
        <taxon>Pseudomonadota</taxon>
        <taxon>Gammaproteobacteria</taxon>
        <taxon>Alteromonadales</taxon>
        <taxon>Shewanellaceae</taxon>
        <taxon>Shewanella</taxon>
    </lineage>
</organism>
<feature type="chain" id="PRO_0000072864" description="Glycine--tRNA ligase alpha subunit">
    <location>
        <begin position="1"/>
        <end position="301"/>
    </location>
</feature>
<protein>
    <recommendedName>
        <fullName evidence="1">Glycine--tRNA ligase alpha subunit</fullName>
        <ecNumber evidence="1">6.1.1.14</ecNumber>
    </recommendedName>
    <alternativeName>
        <fullName evidence="1">Glycyl-tRNA synthetase alpha subunit</fullName>
        <shortName evidence="1">GlyRS</shortName>
    </alternativeName>
</protein>
<reference key="1">
    <citation type="journal article" date="2002" name="Nat. Biotechnol.">
        <title>Genome sequence of the dissimilatory metal ion-reducing bacterium Shewanella oneidensis.</title>
        <authorList>
            <person name="Heidelberg J.F."/>
            <person name="Paulsen I.T."/>
            <person name="Nelson K.E."/>
            <person name="Gaidos E.J."/>
            <person name="Nelson W.C."/>
            <person name="Read T.D."/>
            <person name="Eisen J.A."/>
            <person name="Seshadri R."/>
            <person name="Ward N.L."/>
            <person name="Methe B.A."/>
            <person name="Clayton R.A."/>
            <person name="Meyer T."/>
            <person name="Tsapin A."/>
            <person name="Scott J."/>
            <person name="Beanan M.J."/>
            <person name="Brinkac L.M."/>
            <person name="Daugherty S.C."/>
            <person name="DeBoy R.T."/>
            <person name="Dodson R.J."/>
            <person name="Durkin A.S."/>
            <person name="Haft D.H."/>
            <person name="Kolonay J.F."/>
            <person name="Madupu R."/>
            <person name="Peterson J.D."/>
            <person name="Umayam L.A."/>
            <person name="White O."/>
            <person name="Wolf A.M."/>
            <person name="Vamathevan J.J."/>
            <person name="Weidman J.F."/>
            <person name="Impraim M."/>
            <person name="Lee K."/>
            <person name="Berry K.J."/>
            <person name="Lee C."/>
            <person name="Mueller J."/>
            <person name="Khouri H.M."/>
            <person name="Gill J."/>
            <person name="Utterback T.R."/>
            <person name="McDonald L.A."/>
            <person name="Feldblyum T.V."/>
            <person name="Smith H.O."/>
            <person name="Venter J.C."/>
            <person name="Nealson K.H."/>
            <person name="Fraser C.M."/>
        </authorList>
    </citation>
    <scope>NUCLEOTIDE SEQUENCE [LARGE SCALE GENOMIC DNA]</scope>
    <source>
        <strain>ATCC 700550 / JCM 31522 / CIP 106686 / LMG 19005 / NCIMB 14063 / MR-1</strain>
    </source>
</reference>